<comment type="function">
    <text evidence="1">Heme chaperone required for the biogenesis of c-type cytochromes. Transiently binds heme delivered by CcmC and transfers the heme to apo-cytochromes in a process facilitated by CcmF and CcmH.</text>
</comment>
<comment type="subcellular location">
    <subcellularLocation>
        <location evidence="1">Cell inner membrane</location>
        <topology evidence="1">Single-pass type II membrane protein</topology>
        <orientation evidence="1">Periplasmic side</orientation>
    </subcellularLocation>
</comment>
<comment type="similarity">
    <text evidence="1">Belongs to the CcmE/CycJ family.</text>
</comment>
<feature type="chain" id="PRO_1000189047" description="Cytochrome c-type biogenesis protein CcmE">
    <location>
        <begin position="1"/>
        <end position="168"/>
    </location>
</feature>
<feature type="topological domain" description="Cytoplasmic" evidence="1">
    <location>
        <begin position="1"/>
        <end position="7"/>
    </location>
</feature>
<feature type="transmembrane region" description="Helical; Signal-anchor for type II membrane protein" evidence="1">
    <location>
        <begin position="8"/>
        <end position="28"/>
    </location>
</feature>
<feature type="topological domain" description="Periplasmic" evidence="1">
    <location>
        <begin position="29"/>
        <end position="168"/>
    </location>
</feature>
<feature type="region of interest" description="Disordered" evidence="2">
    <location>
        <begin position="149"/>
        <end position="168"/>
    </location>
</feature>
<feature type="binding site" description="covalent" evidence="1">
    <location>
        <position position="122"/>
    </location>
    <ligand>
        <name>heme</name>
        <dbReference type="ChEBI" id="CHEBI:30413"/>
    </ligand>
</feature>
<feature type="binding site" description="axial binding residue" evidence="1">
    <location>
        <position position="126"/>
    </location>
    <ligand>
        <name>heme</name>
        <dbReference type="ChEBI" id="CHEBI:30413"/>
    </ligand>
    <ligandPart>
        <name>Fe</name>
        <dbReference type="ChEBI" id="CHEBI:18248"/>
    </ligandPart>
</feature>
<accession>B6IVR1</accession>
<dbReference type="EMBL" id="CP000613">
    <property type="protein sequence ID" value="ACJ00385.1"/>
    <property type="molecule type" value="Genomic_DNA"/>
</dbReference>
<dbReference type="RefSeq" id="WP_012568165.1">
    <property type="nucleotide sequence ID" value="NC_011420.2"/>
</dbReference>
<dbReference type="SMR" id="B6IVR1"/>
<dbReference type="STRING" id="414684.RC1_3017"/>
<dbReference type="KEGG" id="rce:RC1_3017"/>
<dbReference type="eggNOG" id="COG2332">
    <property type="taxonomic scope" value="Bacteria"/>
</dbReference>
<dbReference type="HOGENOM" id="CLU_079503_1_1_5"/>
<dbReference type="OrthoDB" id="9793584at2"/>
<dbReference type="Proteomes" id="UP000001591">
    <property type="component" value="Chromosome"/>
</dbReference>
<dbReference type="GO" id="GO:0005886">
    <property type="term" value="C:plasma membrane"/>
    <property type="evidence" value="ECO:0007669"/>
    <property type="project" value="UniProtKB-SubCell"/>
</dbReference>
<dbReference type="GO" id="GO:0020037">
    <property type="term" value="F:heme binding"/>
    <property type="evidence" value="ECO:0007669"/>
    <property type="project" value="InterPro"/>
</dbReference>
<dbReference type="GO" id="GO:0046872">
    <property type="term" value="F:metal ion binding"/>
    <property type="evidence" value="ECO:0007669"/>
    <property type="project" value="UniProtKB-KW"/>
</dbReference>
<dbReference type="GO" id="GO:0017004">
    <property type="term" value="P:cytochrome complex assembly"/>
    <property type="evidence" value="ECO:0007669"/>
    <property type="project" value="UniProtKB-KW"/>
</dbReference>
<dbReference type="FunFam" id="2.40.50.140:FF:000104">
    <property type="entry name" value="Cytochrome c-type biogenesis protein CcmE"/>
    <property type="match status" value="1"/>
</dbReference>
<dbReference type="Gene3D" id="2.40.50.140">
    <property type="entry name" value="Nucleic acid-binding proteins"/>
    <property type="match status" value="1"/>
</dbReference>
<dbReference type="HAMAP" id="MF_01959">
    <property type="entry name" value="CcmE"/>
    <property type="match status" value="1"/>
</dbReference>
<dbReference type="InterPro" id="IPR004329">
    <property type="entry name" value="CcmE"/>
</dbReference>
<dbReference type="InterPro" id="IPR036127">
    <property type="entry name" value="CcmE-like_sf"/>
</dbReference>
<dbReference type="InterPro" id="IPR012340">
    <property type="entry name" value="NA-bd_OB-fold"/>
</dbReference>
<dbReference type="NCBIfam" id="NF009727">
    <property type="entry name" value="PRK13254.1-1"/>
    <property type="match status" value="1"/>
</dbReference>
<dbReference type="NCBIfam" id="NF009729">
    <property type="entry name" value="PRK13254.1-3"/>
    <property type="match status" value="1"/>
</dbReference>
<dbReference type="NCBIfam" id="NF009731">
    <property type="entry name" value="PRK13254.1-5"/>
    <property type="match status" value="1"/>
</dbReference>
<dbReference type="PANTHER" id="PTHR34128">
    <property type="entry name" value="CYTOCHROME C-TYPE BIOGENESIS PROTEIN CCME HOMOLOG, MITOCHONDRIAL"/>
    <property type="match status" value="1"/>
</dbReference>
<dbReference type="PANTHER" id="PTHR34128:SF2">
    <property type="entry name" value="CYTOCHROME C-TYPE BIOGENESIS PROTEIN CCME HOMOLOG, MITOCHONDRIAL"/>
    <property type="match status" value="1"/>
</dbReference>
<dbReference type="Pfam" id="PF03100">
    <property type="entry name" value="CcmE"/>
    <property type="match status" value="1"/>
</dbReference>
<dbReference type="SUPFAM" id="SSF82093">
    <property type="entry name" value="Heme chaperone CcmE"/>
    <property type="match status" value="1"/>
</dbReference>
<proteinExistence type="inferred from homology"/>
<reference key="1">
    <citation type="submission" date="2007-03" db="EMBL/GenBank/DDBJ databases">
        <title>Genome sequence of Rhodospirillum centenum.</title>
        <authorList>
            <person name="Touchman J.W."/>
            <person name="Bauer C."/>
            <person name="Blankenship R.E."/>
        </authorList>
    </citation>
    <scope>NUCLEOTIDE SEQUENCE [LARGE SCALE GENOMIC DNA]</scope>
    <source>
        <strain>ATCC 51521 / SW</strain>
    </source>
</reference>
<protein>
    <recommendedName>
        <fullName evidence="1">Cytochrome c-type biogenesis protein CcmE</fullName>
    </recommendedName>
    <alternativeName>
        <fullName evidence="1">Cytochrome c maturation protein E</fullName>
    </alternativeName>
    <alternativeName>
        <fullName evidence="1">Heme chaperone CcmE</fullName>
    </alternativeName>
</protein>
<organism>
    <name type="scientific">Rhodospirillum centenum (strain ATCC 51521 / SW)</name>
    <dbReference type="NCBI Taxonomy" id="414684"/>
    <lineage>
        <taxon>Bacteria</taxon>
        <taxon>Pseudomonadati</taxon>
        <taxon>Pseudomonadota</taxon>
        <taxon>Alphaproteobacteria</taxon>
        <taxon>Rhodospirillales</taxon>
        <taxon>Rhodospirillaceae</taxon>
        <taxon>Rhodospirillum</taxon>
    </lineage>
</organism>
<keyword id="KW-0997">Cell inner membrane</keyword>
<keyword id="KW-1003">Cell membrane</keyword>
<keyword id="KW-0201">Cytochrome c-type biogenesis</keyword>
<keyword id="KW-0349">Heme</keyword>
<keyword id="KW-0408">Iron</keyword>
<keyword id="KW-0472">Membrane</keyword>
<keyword id="KW-0479">Metal-binding</keyword>
<keyword id="KW-1185">Reference proteome</keyword>
<keyword id="KW-0735">Signal-anchor</keyword>
<keyword id="KW-0812">Transmembrane</keyword>
<keyword id="KW-1133">Transmembrane helix</keyword>
<sequence>MTRKKRRLYMLGLALLGLGTATALTLSAFEENIVFFYSPSDLVVQPPGDRSVRLGGLVEDGSVQKQADGLTITFRVTDTANTVPVTYKGIVPDLFREGQGVVAEGRMGGDGVFVAREVLARHDENYMPPEVHDALQRAGAVKTEVPGRSIYTPADSDDKVHATTTLKP</sequence>
<gene>
    <name evidence="1" type="primary">ccmE</name>
    <name evidence="1" type="synonym">cycJ</name>
    <name type="ordered locus">RC1_3017</name>
</gene>
<name>CCME_RHOCS</name>
<evidence type="ECO:0000255" key="1">
    <source>
        <dbReference type="HAMAP-Rule" id="MF_01959"/>
    </source>
</evidence>
<evidence type="ECO:0000256" key="2">
    <source>
        <dbReference type="SAM" id="MobiDB-lite"/>
    </source>
</evidence>